<name>PURA_CHLRE</name>
<protein>
    <recommendedName>
        <fullName evidence="2">Adenylosuccinate synthetase, chloroplastic</fullName>
        <shortName evidence="2">AMPSase</shortName>
        <shortName evidence="2">AdSS</shortName>
        <ecNumber evidence="2">6.3.4.4</ecNumber>
    </recommendedName>
    <alternativeName>
        <fullName evidence="2">IMP--aspartate ligase</fullName>
    </alternativeName>
</protein>
<organism>
    <name type="scientific">Chlamydomonas reinhardtii</name>
    <name type="common">Chlamydomonas smithii</name>
    <dbReference type="NCBI Taxonomy" id="3055"/>
    <lineage>
        <taxon>Eukaryota</taxon>
        <taxon>Viridiplantae</taxon>
        <taxon>Chlorophyta</taxon>
        <taxon>core chlorophytes</taxon>
        <taxon>Chlorophyceae</taxon>
        <taxon>CS clade</taxon>
        <taxon>Chlamydomonadales</taxon>
        <taxon>Chlamydomonadaceae</taxon>
        <taxon>Chlamydomonas</taxon>
    </lineage>
</organism>
<comment type="function">
    <text evidence="1">Plays an important role in the de novo pathway and in the salvage pathway of purine nucleotide biosynthesis. Catalyzes the first committed step in the biosynthesis of AMP from IMP (By similarity).</text>
</comment>
<comment type="catalytic activity">
    <reaction evidence="2">
        <text>IMP + L-aspartate + GTP = N(6)-(1,2-dicarboxyethyl)-AMP + GDP + phosphate + 2 H(+)</text>
        <dbReference type="Rhea" id="RHEA:15753"/>
        <dbReference type="ChEBI" id="CHEBI:15378"/>
        <dbReference type="ChEBI" id="CHEBI:29991"/>
        <dbReference type="ChEBI" id="CHEBI:37565"/>
        <dbReference type="ChEBI" id="CHEBI:43474"/>
        <dbReference type="ChEBI" id="CHEBI:57567"/>
        <dbReference type="ChEBI" id="CHEBI:58053"/>
        <dbReference type="ChEBI" id="CHEBI:58189"/>
        <dbReference type="EC" id="6.3.4.4"/>
    </reaction>
</comment>
<comment type="cofactor">
    <cofactor evidence="2">
        <name>Mg(2+)</name>
        <dbReference type="ChEBI" id="CHEBI:18420"/>
    </cofactor>
    <text evidence="2">Binds 1 Mg(2+) ion per subunit.</text>
</comment>
<comment type="pathway">
    <text evidence="2">Purine metabolism; AMP biosynthesis via de novo pathway; AMP from IMP: step 1/2.</text>
</comment>
<comment type="subunit">
    <text evidence="2">Homodimer.</text>
</comment>
<comment type="subcellular location">
    <subcellularLocation>
        <location evidence="2">Plastid</location>
        <location evidence="2">Chloroplast</location>
    </subcellularLocation>
</comment>
<comment type="miscellaneous">
    <text evidence="2">This protein may be expected to contain an N-terminal transit peptide but none has been predicted.</text>
</comment>
<comment type="similarity">
    <text evidence="2">Belongs to the adenylosuccinate synthetase family.</text>
</comment>
<sequence>MATSLMKSSLALHAAPRPRSVRLSATSSRVDSPQVSVVLGTQWGDEGKGKLVDNLAQQFDIVARAQGGANAGHTIYDETGRKFALHLVPSGILNPKATCVIGNGVVLHLPGLFEEIRRLKEKGVQVDGRLLVSDRAHLLFDLHKEIDGLREAELAGDGKQIGTTKRGIGPAYSSKATRNGLRVCDLFDRATFKTKLTNLAADGAKRFGEKFAYDVEGDIAAYEKLAEEIRPFVVDTVEYLHEALQSGKRILIEGANATMLDLDFGTYPYVTSSNPSIGGIATGLGLPPSSYDDIVGVAKAYTTRVGAGPYPTEIHGKLAEDLRAVGHEYGTTTGRPRRIGWMDIVALRYACKINGVTHINLTKLDVLDNLEEIQVGVGYKTKEGKMLKSVPADLHTLENVEVVYETLPGWQADISAARQWAQLPAAAQAYVQRIEDLIGIPVKWIGVGPGRDALVVKPEAPKK</sequence>
<accession>A8IW34</accession>
<reference key="1">
    <citation type="journal article" date="2007" name="Science">
        <title>The Chlamydomonas genome reveals the evolution of key animal and plant functions.</title>
        <authorList>
            <person name="Merchant S.S."/>
            <person name="Prochnik S.E."/>
            <person name="Vallon O."/>
            <person name="Harris E.H."/>
            <person name="Karpowicz S.J."/>
            <person name="Witman G.B."/>
            <person name="Terry A."/>
            <person name="Salamov A."/>
            <person name="Fritz-Laylin L.K."/>
            <person name="Marechal-Drouard L."/>
            <person name="Marshall W.F."/>
            <person name="Qu L.H."/>
            <person name="Nelson D.R."/>
            <person name="Sanderfoot A.A."/>
            <person name="Spalding M.H."/>
            <person name="Kapitonov V.V."/>
            <person name="Ren Q."/>
            <person name="Ferris P."/>
            <person name="Lindquist E."/>
            <person name="Shapiro H."/>
            <person name="Lucas S.M."/>
            <person name="Grimwood J."/>
            <person name="Schmutz J."/>
            <person name="Cardol P."/>
            <person name="Cerutti H."/>
            <person name="Chanfreau G."/>
            <person name="Chen C.L."/>
            <person name="Cognat V."/>
            <person name="Croft M.T."/>
            <person name="Dent R."/>
            <person name="Dutcher S."/>
            <person name="Fernandez E."/>
            <person name="Fukuzawa H."/>
            <person name="Gonzalez-Ballester D."/>
            <person name="Gonzalez-Halphen D."/>
            <person name="Hallmann A."/>
            <person name="Hanikenne M."/>
            <person name="Hippler M."/>
            <person name="Inwood W."/>
            <person name="Jabbari K."/>
            <person name="Kalanon M."/>
            <person name="Kuras R."/>
            <person name="Lefebvre P.A."/>
            <person name="Lemaire S.D."/>
            <person name="Lobanov A.V."/>
            <person name="Lohr M."/>
            <person name="Manuell A."/>
            <person name="Meier I."/>
            <person name="Mets L."/>
            <person name="Mittag M."/>
            <person name="Mittelmeier T."/>
            <person name="Moroney J.V."/>
            <person name="Moseley J."/>
            <person name="Napoli C."/>
            <person name="Nedelcu A.M."/>
            <person name="Niyogi K."/>
            <person name="Novoselov S.V."/>
            <person name="Paulsen I.T."/>
            <person name="Pazour G.J."/>
            <person name="Purton S."/>
            <person name="Ral J.P."/>
            <person name="Riano-Pachon D.M."/>
            <person name="Riekhof W."/>
            <person name="Rymarquis L."/>
            <person name="Schroda M."/>
            <person name="Stern D."/>
            <person name="Umen J."/>
            <person name="Willows R."/>
            <person name="Wilson N."/>
            <person name="Zimmer S.L."/>
            <person name="Allmer J."/>
            <person name="Balk J."/>
            <person name="Bisova K."/>
            <person name="Chen C.J."/>
            <person name="Elias M."/>
            <person name="Gendler K."/>
            <person name="Hauser C."/>
            <person name="Lamb M.R."/>
            <person name="Ledford H."/>
            <person name="Long J.C."/>
            <person name="Minagawa J."/>
            <person name="Page M.D."/>
            <person name="Pan J."/>
            <person name="Pootakham W."/>
            <person name="Roje S."/>
            <person name="Rose A."/>
            <person name="Stahlberg E."/>
            <person name="Terauchi A.M."/>
            <person name="Yang P."/>
            <person name="Ball S."/>
            <person name="Bowler C."/>
            <person name="Dieckmann C.L."/>
            <person name="Gladyshev V.N."/>
            <person name="Green P."/>
            <person name="Jorgensen R."/>
            <person name="Mayfield S."/>
            <person name="Mueller-Roeber B."/>
            <person name="Rajamani S."/>
            <person name="Sayre R.T."/>
            <person name="Brokstein P."/>
            <person name="Dubchak I."/>
            <person name="Goodstein D."/>
            <person name="Hornick L."/>
            <person name="Huang Y.W."/>
            <person name="Jhaveri J."/>
            <person name="Luo Y."/>
            <person name="Martinez D."/>
            <person name="Ngau W.C."/>
            <person name="Otillar B."/>
            <person name="Poliakov A."/>
            <person name="Porter A."/>
            <person name="Szajkowski L."/>
            <person name="Werner G."/>
            <person name="Zhou K."/>
            <person name="Grigoriev I.V."/>
            <person name="Rokhsar D.S."/>
            <person name="Grossman A.R."/>
        </authorList>
    </citation>
    <scope>NUCLEOTIDE SEQUENCE [LARGE SCALE GENOMIC DNA]</scope>
    <source>
        <strain>CC-503</strain>
        <strain>cw92</strain>
    </source>
</reference>
<gene>
    <name evidence="2" type="primary">PURA</name>
    <name type="ORF">CHLREDRAFT_196727</name>
</gene>
<evidence type="ECO:0000250" key="1"/>
<evidence type="ECO:0000255" key="2">
    <source>
        <dbReference type="HAMAP-Rule" id="MF_03125"/>
    </source>
</evidence>
<proteinExistence type="inferred from homology"/>
<dbReference type="EC" id="6.3.4.4" evidence="2"/>
<dbReference type="EMBL" id="DS496125">
    <property type="protein sequence ID" value="EDP03502.1"/>
    <property type="molecule type" value="Genomic_DNA"/>
</dbReference>
<dbReference type="RefSeq" id="XP_001692933.1">
    <property type="nucleotide sequence ID" value="XM_001692881.1"/>
</dbReference>
<dbReference type="SMR" id="A8IW34"/>
<dbReference type="PaxDb" id="3055-EDP03502"/>
<dbReference type="ProMEX" id="A8IW34"/>
<dbReference type="EnsemblPlants" id="PNW70787">
    <property type="protein sequence ID" value="PNW70787"/>
    <property type="gene ID" value="CHLRE_17g734100v5"/>
</dbReference>
<dbReference type="GeneID" id="5718614"/>
<dbReference type="Gramene" id="PNW70787">
    <property type="protein sequence ID" value="PNW70787"/>
    <property type="gene ID" value="CHLRE_17g734100v5"/>
</dbReference>
<dbReference type="KEGG" id="cre:CHLRE_17g734100v5"/>
<dbReference type="eggNOG" id="KOG1355">
    <property type="taxonomic scope" value="Eukaryota"/>
</dbReference>
<dbReference type="HOGENOM" id="CLU_029848_0_0_1"/>
<dbReference type="OMA" id="FHHAKPI"/>
<dbReference type="OrthoDB" id="10265645at2759"/>
<dbReference type="UniPathway" id="UPA00075">
    <property type="reaction ID" value="UER00335"/>
</dbReference>
<dbReference type="GO" id="GO:0009507">
    <property type="term" value="C:chloroplast"/>
    <property type="evidence" value="ECO:0007669"/>
    <property type="project" value="UniProtKB-SubCell"/>
</dbReference>
<dbReference type="GO" id="GO:0004019">
    <property type="term" value="F:adenylosuccinate synthase activity"/>
    <property type="evidence" value="ECO:0007669"/>
    <property type="project" value="UniProtKB-UniRule"/>
</dbReference>
<dbReference type="GO" id="GO:0005525">
    <property type="term" value="F:GTP binding"/>
    <property type="evidence" value="ECO:0007669"/>
    <property type="project" value="UniProtKB-UniRule"/>
</dbReference>
<dbReference type="GO" id="GO:0000287">
    <property type="term" value="F:magnesium ion binding"/>
    <property type="evidence" value="ECO:0007669"/>
    <property type="project" value="UniProtKB-UniRule"/>
</dbReference>
<dbReference type="GO" id="GO:0044208">
    <property type="term" value="P:'de novo' AMP biosynthetic process"/>
    <property type="evidence" value="ECO:0007669"/>
    <property type="project" value="UniProtKB-UniRule"/>
</dbReference>
<dbReference type="CDD" id="cd03108">
    <property type="entry name" value="AdSS"/>
    <property type="match status" value="1"/>
</dbReference>
<dbReference type="FunFam" id="3.90.170.10:FF:000001">
    <property type="entry name" value="Adenylosuccinate synthetase"/>
    <property type="match status" value="1"/>
</dbReference>
<dbReference type="FunFam" id="1.10.300.10:FF:000002">
    <property type="entry name" value="Adenylosuccinate synthetase, chloroplastic"/>
    <property type="match status" value="1"/>
</dbReference>
<dbReference type="Gene3D" id="3.40.440.10">
    <property type="entry name" value="Adenylosuccinate Synthetase, subunit A, domain 1"/>
    <property type="match status" value="1"/>
</dbReference>
<dbReference type="Gene3D" id="1.10.300.10">
    <property type="entry name" value="Adenylosuccinate Synthetase, subunit A, domain 2"/>
    <property type="match status" value="1"/>
</dbReference>
<dbReference type="Gene3D" id="3.90.170.10">
    <property type="entry name" value="Adenylosuccinate Synthetase, subunit A, domain 3"/>
    <property type="match status" value="1"/>
</dbReference>
<dbReference type="HAMAP" id="MF_00011">
    <property type="entry name" value="Adenylosucc_synth"/>
    <property type="match status" value="1"/>
</dbReference>
<dbReference type="InterPro" id="IPR018220">
    <property type="entry name" value="Adenylosuccin_syn_GTP-bd"/>
</dbReference>
<dbReference type="InterPro" id="IPR033128">
    <property type="entry name" value="Adenylosuccin_syn_Lys_AS"/>
</dbReference>
<dbReference type="InterPro" id="IPR042109">
    <property type="entry name" value="Adenylosuccinate_synth_dom1"/>
</dbReference>
<dbReference type="InterPro" id="IPR042110">
    <property type="entry name" value="Adenylosuccinate_synth_dom2"/>
</dbReference>
<dbReference type="InterPro" id="IPR042111">
    <property type="entry name" value="Adenylosuccinate_synth_dom3"/>
</dbReference>
<dbReference type="InterPro" id="IPR001114">
    <property type="entry name" value="Adenylosuccinate_synthetase"/>
</dbReference>
<dbReference type="InterPro" id="IPR027417">
    <property type="entry name" value="P-loop_NTPase"/>
</dbReference>
<dbReference type="NCBIfam" id="NF002223">
    <property type="entry name" value="PRK01117.1"/>
    <property type="match status" value="1"/>
</dbReference>
<dbReference type="NCBIfam" id="TIGR00184">
    <property type="entry name" value="purA"/>
    <property type="match status" value="1"/>
</dbReference>
<dbReference type="PANTHER" id="PTHR11846">
    <property type="entry name" value="ADENYLOSUCCINATE SYNTHETASE"/>
    <property type="match status" value="1"/>
</dbReference>
<dbReference type="PANTHER" id="PTHR11846:SF0">
    <property type="entry name" value="ADENYLOSUCCINATE SYNTHETASE"/>
    <property type="match status" value="1"/>
</dbReference>
<dbReference type="Pfam" id="PF00709">
    <property type="entry name" value="Adenylsucc_synt"/>
    <property type="match status" value="1"/>
</dbReference>
<dbReference type="SMART" id="SM00788">
    <property type="entry name" value="Adenylsucc_synt"/>
    <property type="match status" value="1"/>
</dbReference>
<dbReference type="SUPFAM" id="SSF52540">
    <property type="entry name" value="P-loop containing nucleoside triphosphate hydrolases"/>
    <property type="match status" value="1"/>
</dbReference>
<dbReference type="PROSITE" id="PS01266">
    <property type="entry name" value="ADENYLOSUCCIN_SYN_1"/>
    <property type="match status" value="1"/>
</dbReference>
<dbReference type="PROSITE" id="PS00513">
    <property type="entry name" value="ADENYLOSUCCIN_SYN_2"/>
    <property type="match status" value="1"/>
</dbReference>
<feature type="chain" id="PRO_0000399274" description="Adenylosuccinate synthetase, chloroplastic">
    <location>
        <begin position="1"/>
        <end position="463"/>
    </location>
</feature>
<feature type="active site" description="Proton acceptor" evidence="2">
    <location>
        <position position="45"/>
    </location>
</feature>
<feature type="active site" description="Proton donor" evidence="2">
    <location>
        <position position="73"/>
    </location>
</feature>
<feature type="binding site" evidence="2">
    <location>
        <begin position="44"/>
        <end position="50"/>
    </location>
    <ligand>
        <name>GTP</name>
        <dbReference type="ChEBI" id="CHEBI:37565"/>
    </ligand>
</feature>
<feature type="binding site" description="in other chain" evidence="2">
    <location>
        <begin position="45"/>
        <end position="48"/>
    </location>
    <ligand>
        <name>IMP</name>
        <dbReference type="ChEBI" id="CHEBI:58053"/>
        <note>ligand shared between dimeric partners</note>
    </ligand>
</feature>
<feature type="binding site" evidence="2">
    <location>
        <position position="45"/>
    </location>
    <ligand>
        <name>Mg(2+)</name>
        <dbReference type="ChEBI" id="CHEBI:18420"/>
    </ligand>
</feature>
<feature type="binding site" description="in other chain" evidence="2">
    <location>
        <begin position="70"/>
        <end position="73"/>
    </location>
    <ligand>
        <name>IMP</name>
        <dbReference type="ChEBI" id="CHEBI:58053"/>
        <note>ligand shared between dimeric partners</note>
    </ligand>
</feature>
<feature type="binding site" evidence="2">
    <location>
        <begin position="72"/>
        <end position="74"/>
    </location>
    <ligand>
        <name>GTP</name>
        <dbReference type="ChEBI" id="CHEBI:37565"/>
    </ligand>
</feature>
<feature type="binding site" evidence="2">
    <location>
        <position position="72"/>
    </location>
    <ligand>
        <name>Mg(2+)</name>
        <dbReference type="ChEBI" id="CHEBI:18420"/>
    </ligand>
</feature>
<feature type="binding site" description="in other chain" evidence="2">
    <location>
        <position position="164"/>
    </location>
    <ligand>
        <name>IMP</name>
        <dbReference type="ChEBI" id="CHEBI:58053"/>
        <note>ligand shared between dimeric partners</note>
    </ligand>
</feature>
<feature type="binding site" evidence="2">
    <location>
        <position position="178"/>
    </location>
    <ligand>
        <name>IMP</name>
        <dbReference type="ChEBI" id="CHEBI:58053"/>
        <note>ligand shared between dimeric partners</note>
    </ligand>
</feature>
<feature type="binding site" description="in other chain" evidence="2">
    <location>
        <position position="256"/>
    </location>
    <ligand>
        <name>IMP</name>
        <dbReference type="ChEBI" id="CHEBI:58053"/>
        <note>ligand shared between dimeric partners</note>
    </ligand>
</feature>
<feature type="binding site" description="in other chain" evidence="2">
    <location>
        <position position="271"/>
    </location>
    <ligand>
        <name>IMP</name>
        <dbReference type="ChEBI" id="CHEBI:58053"/>
        <note>ligand shared between dimeric partners</note>
    </ligand>
</feature>
<feature type="binding site" evidence="2">
    <location>
        <begin position="331"/>
        <end position="337"/>
    </location>
    <ligand>
        <name>substrate</name>
    </ligand>
</feature>
<feature type="binding site" description="in other chain" evidence="2">
    <location>
        <position position="335"/>
    </location>
    <ligand>
        <name>IMP</name>
        <dbReference type="ChEBI" id="CHEBI:58053"/>
        <note>ligand shared between dimeric partners</note>
    </ligand>
</feature>
<feature type="binding site" evidence="2">
    <location>
        <position position="337"/>
    </location>
    <ligand>
        <name>GTP</name>
        <dbReference type="ChEBI" id="CHEBI:37565"/>
    </ligand>
</feature>
<feature type="binding site" evidence="2">
    <location>
        <begin position="363"/>
        <end position="365"/>
    </location>
    <ligand>
        <name>GTP</name>
        <dbReference type="ChEBI" id="CHEBI:37565"/>
    </ligand>
</feature>
<feature type="binding site" evidence="2">
    <location>
        <begin position="446"/>
        <end position="448"/>
    </location>
    <ligand>
        <name>GTP</name>
        <dbReference type="ChEBI" id="CHEBI:37565"/>
    </ligand>
</feature>
<keyword id="KW-0150">Chloroplast</keyword>
<keyword id="KW-0342">GTP-binding</keyword>
<keyword id="KW-0436">Ligase</keyword>
<keyword id="KW-0460">Magnesium</keyword>
<keyword id="KW-0479">Metal-binding</keyword>
<keyword id="KW-0547">Nucleotide-binding</keyword>
<keyword id="KW-0934">Plastid</keyword>
<keyword id="KW-0658">Purine biosynthesis</keyword>